<protein>
    <recommendedName>
        <fullName evidence="2">HTH-type transcriptional repressor PurR</fullName>
    </recommendedName>
    <alternativeName>
        <fullName evidence="2">Pur regulon repressor</fullName>
    </alternativeName>
    <alternativeName>
        <fullName evidence="2">Purine nucleotide synthesis repressor</fullName>
    </alternativeName>
</protein>
<reference key="1">
    <citation type="submission" date="1997-12" db="EMBL/GenBank/DDBJ databases">
        <authorList>
            <person name="Katzif S.D."/>
            <person name="Lu C.D."/>
            <person name="Abdelal A.T."/>
        </authorList>
    </citation>
    <scope>NUCLEOTIDE SEQUENCE [GENOMIC DNA]</scope>
    <source>
        <strain>LT2</strain>
    </source>
</reference>
<reference key="2">
    <citation type="journal article" date="2001" name="Nature">
        <title>Complete genome sequence of Salmonella enterica serovar Typhimurium LT2.</title>
        <authorList>
            <person name="McClelland M."/>
            <person name="Sanderson K.E."/>
            <person name="Spieth J."/>
            <person name="Clifton S.W."/>
            <person name="Latreille P."/>
            <person name="Courtney L."/>
            <person name="Porwollik S."/>
            <person name="Ali J."/>
            <person name="Dante M."/>
            <person name="Du F."/>
            <person name="Hou S."/>
            <person name="Layman D."/>
            <person name="Leonard S."/>
            <person name="Nguyen C."/>
            <person name="Scott K."/>
            <person name="Holmes A."/>
            <person name="Grewal N."/>
            <person name="Mulvaney E."/>
            <person name="Ryan E."/>
            <person name="Sun H."/>
            <person name="Florea L."/>
            <person name="Miller W."/>
            <person name="Stoneking T."/>
            <person name="Nhan M."/>
            <person name="Waterston R."/>
            <person name="Wilson R.K."/>
        </authorList>
    </citation>
    <scope>NUCLEOTIDE SEQUENCE [LARGE SCALE GENOMIC DNA]</scope>
    <source>
        <strain>LT2 / SGSC1412 / ATCC 700720</strain>
    </source>
</reference>
<proteinExistence type="inferred from homology"/>
<evidence type="ECO:0000250" key="1"/>
<evidence type="ECO:0000255" key="2">
    <source>
        <dbReference type="HAMAP-Rule" id="MF_01277"/>
    </source>
</evidence>
<comment type="function">
    <text evidence="2">Is the main repressor of the genes involved in the de novo synthesis of purine nucleotides, regulating purB, purC, purEK, purF, purHD, purL, purMN and guaBA expression. PurR is allosterically activated to bind its cognate DNA by binding the purine corepressors, hypoxanthine or guanine, thereby effecting transcription repression.</text>
</comment>
<comment type="pathway">
    <text>Purine metabolism; purine nucleotide biosynthesis [regulation].</text>
</comment>
<comment type="subunit">
    <text evidence="2">Homodimer.</text>
</comment>
<comment type="domain">
    <text evidence="2">Consists of two structural and functional domains: an N-terminal DNA-binding domain, approximately the first 60 residues, and a larger C-terminal domain, approximately 280 residues, which imparts the function of corepressor binding and oligomerization.</text>
</comment>
<feature type="initiator methionine" description="Removed" evidence="1">
    <location>
        <position position="1"/>
    </location>
</feature>
<feature type="chain" id="PRO_0000107981" description="HTH-type transcriptional repressor PurR">
    <location>
        <begin position="2"/>
        <end position="341"/>
    </location>
</feature>
<feature type="domain" description="HTH lacI-type" evidence="2">
    <location>
        <begin position="2"/>
        <end position="56"/>
    </location>
</feature>
<feature type="DNA-binding region" description="H-T-H motif" evidence="2">
    <location>
        <begin position="4"/>
        <end position="23"/>
    </location>
</feature>
<feature type="DNA-binding region" evidence="2">
    <location>
        <begin position="48"/>
        <end position="56"/>
    </location>
</feature>
<feature type="binding site" evidence="2">
    <location>
        <position position="73"/>
    </location>
    <ligand>
        <name>hypoxanthine</name>
        <dbReference type="ChEBI" id="CHEBI:17368"/>
    </ligand>
</feature>
<feature type="binding site" evidence="2">
    <location>
        <position position="190"/>
    </location>
    <ligand>
        <name>hypoxanthine</name>
        <dbReference type="ChEBI" id="CHEBI:17368"/>
    </ligand>
</feature>
<feature type="binding site" evidence="2">
    <location>
        <position position="192"/>
    </location>
    <ligand>
        <name>hypoxanthine</name>
        <dbReference type="ChEBI" id="CHEBI:17368"/>
    </ligand>
</feature>
<feature type="binding site" evidence="2">
    <location>
        <position position="221"/>
    </location>
    <ligand>
        <name>hypoxanthine</name>
        <dbReference type="ChEBI" id="CHEBI:17368"/>
    </ligand>
</feature>
<feature type="binding site" evidence="2">
    <location>
        <position position="275"/>
    </location>
    <ligand>
        <name>hypoxanthine</name>
        <dbReference type="ChEBI" id="CHEBI:17368"/>
    </ligand>
</feature>
<keyword id="KW-0238">DNA-binding</keyword>
<keyword id="KW-0658">Purine biosynthesis</keyword>
<keyword id="KW-1185">Reference proteome</keyword>
<keyword id="KW-0678">Repressor</keyword>
<keyword id="KW-0804">Transcription</keyword>
<keyword id="KW-0805">Transcription regulation</keyword>
<gene>
    <name evidence="2" type="primary">purR</name>
    <name type="ordered locus">STM1430</name>
</gene>
<accession>O68446</accession>
<dbReference type="EMBL" id="AF040636">
    <property type="protein sequence ID" value="AAC05741.1"/>
    <property type="molecule type" value="Genomic_DNA"/>
</dbReference>
<dbReference type="EMBL" id="AE006468">
    <property type="protein sequence ID" value="AAL20352.1"/>
    <property type="molecule type" value="Genomic_DNA"/>
</dbReference>
<dbReference type="RefSeq" id="NP_460393.1">
    <property type="nucleotide sequence ID" value="NC_003197.2"/>
</dbReference>
<dbReference type="RefSeq" id="WP_000190993.1">
    <property type="nucleotide sequence ID" value="NC_003197.2"/>
</dbReference>
<dbReference type="SMR" id="O68446"/>
<dbReference type="STRING" id="99287.STM1430"/>
<dbReference type="PaxDb" id="99287-STM1430"/>
<dbReference type="GeneID" id="1252948"/>
<dbReference type="KEGG" id="stm:STM1430"/>
<dbReference type="PATRIC" id="fig|99287.12.peg.1512"/>
<dbReference type="HOGENOM" id="CLU_037628_6_2_6"/>
<dbReference type="OMA" id="ARWVGPP"/>
<dbReference type="PhylomeDB" id="O68446"/>
<dbReference type="BioCyc" id="SENT99287:STM1430-MONOMER"/>
<dbReference type="UniPathway" id="UPA00488"/>
<dbReference type="Proteomes" id="UP000001014">
    <property type="component" value="Chromosome"/>
</dbReference>
<dbReference type="GO" id="GO:0003700">
    <property type="term" value="F:DNA-binding transcription factor activity"/>
    <property type="evidence" value="ECO:0000318"/>
    <property type="project" value="GO_Central"/>
</dbReference>
<dbReference type="GO" id="GO:0000976">
    <property type="term" value="F:transcription cis-regulatory region binding"/>
    <property type="evidence" value="ECO:0000318"/>
    <property type="project" value="GO_Central"/>
</dbReference>
<dbReference type="GO" id="GO:0045892">
    <property type="term" value="P:negative regulation of DNA-templated transcription"/>
    <property type="evidence" value="ECO:0007669"/>
    <property type="project" value="UniProtKB-UniRule"/>
</dbReference>
<dbReference type="GO" id="GO:0006164">
    <property type="term" value="P:purine nucleotide biosynthetic process"/>
    <property type="evidence" value="ECO:0007669"/>
    <property type="project" value="UniProtKB-UniPathway"/>
</dbReference>
<dbReference type="GO" id="GO:0006355">
    <property type="term" value="P:regulation of DNA-templated transcription"/>
    <property type="evidence" value="ECO:0000318"/>
    <property type="project" value="GO_Central"/>
</dbReference>
<dbReference type="CDD" id="cd01392">
    <property type="entry name" value="HTH_LacI"/>
    <property type="match status" value="1"/>
</dbReference>
<dbReference type="CDD" id="cd06275">
    <property type="entry name" value="PBP1_PurR"/>
    <property type="match status" value="1"/>
</dbReference>
<dbReference type="FunFam" id="1.10.260.40:FF:000002">
    <property type="entry name" value="HTH-type transcriptional repressor PurR"/>
    <property type="match status" value="1"/>
</dbReference>
<dbReference type="FunFam" id="3.40.50.2300:FF:000045">
    <property type="entry name" value="HTH-type transcriptional repressor PurR"/>
    <property type="match status" value="1"/>
</dbReference>
<dbReference type="Gene3D" id="3.40.50.2300">
    <property type="match status" value="2"/>
</dbReference>
<dbReference type="Gene3D" id="1.10.260.40">
    <property type="entry name" value="lambda repressor-like DNA-binding domains"/>
    <property type="match status" value="1"/>
</dbReference>
<dbReference type="HAMAP" id="MF_01277">
    <property type="entry name" value="HTH_type_PurR"/>
    <property type="match status" value="1"/>
</dbReference>
<dbReference type="InterPro" id="IPR000843">
    <property type="entry name" value="HTH_LacI"/>
</dbReference>
<dbReference type="InterPro" id="IPR046335">
    <property type="entry name" value="LacI/GalR-like_sensor"/>
</dbReference>
<dbReference type="InterPro" id="IPR010982">
    <property type="entry name" value="Lambda_DNA-bd_dom_sf"/>
</dbReference>
<dbReference type="InterPro" id="IPR028082">
    <property type="entry name" value="Peripla_BP_I"/>
</dbReference>
<dbReference type="InterPro" id="IPR023588">
    <property type="entry name" value="Tscrpt_reg_HTH_PurR"/>
</dbReference>
<dbReference type="NCBIfam" id="NF007979">
    <property type="entry name" value="PRK10703.1"/>
    <property type="match status" value="1"/>
</dbReference>
<dbReference type="PANTHER" id="PTHR30146:SF148">
    <property type="entry name" value="HTH-TYPE TRANSCRIPTIONAL REPRESSOR PURR-RELATED"/>
    <property type="match status" value="1"/>
</dbReference>
<dbReference type="PANTHER" id="PTHR30146">
    <property type="entry name" value="LACI-RELATED TRANSCRIPTIONAL REPRESSOR"/>
    <property type="match status" value="1"/>
</dbReference>
<dbReference type="Pfam" id="PF00356">
    <property type="entry name" value="LacI"/>
    <property type="match status" value="1"/>
</dbReference>
<dbReference type="Pfam" id="PF13377">
    <property type="entry name" value="Peripla_BP_3"/>
    <property type="match status" value="1"/>
</dbReference>
<dbReference type="PRINTS" id="PR00036">
    <property type="entry name" value="HTHLACI"/>
</dbReference>
<dbReference type="SMART" id="SM00354">
    <property type="entry name" value="HTH_LACI"/>
    <property type="match status" value="1"/>
</dbReference>
<dbReference type="SUPFAM" id="SSF47413">
    <property type="entry name" value="lambda repressor-like DNA-binding domains"/>
    <property type="match status" value="1"/>
</dbReference>
<dbReference type="SUPFAM" id="SSF53822">
    <property type="entry name" value="Periplasmic binding protein-like I"/>
    <property type="match status" value="1"/>
</dbReference>
<dbReference type="PROSITE" id="PS00356">
    <property type="entry name" value="HTH_LACI_1"/>
    <property type="match status" value="1"/>
</dbReference>
<dbReference type="PROSITE" id="PS50932">
    <property type="entry name" value="HTH_LACI_2"/>
    <property type="match status" value="1"/>
</dbReference>
<sequence>MATIKDVAKRANVSTTTVSHVINKTRFVAEETRNAVWAAIKELHYSPSAVARSLKVNHTKSIGLLATSSEAAYFAEIIEAVEKNCFQKGYTLILGNAWNNLEKQRAYLSMMAQKRVDGLLVMCSEYPEPLLSMLEEYRHIPMVVMDWGEAKADFTDTVIDNAFAGGYMAGRYLVERGHRDIGVIPGPLERNTGAGRLAGFMKAMEEALINVPDNWIVQGDFEPESGYHAMQQILSQSHRPTAVFCGGDIMAMGALCAADEMGLRVPQDVSVIGYDNVRNARYFTPALTTIHQPKDSLGETAFNMLLDRIVNKREESQSIEVHPRLVERRSVADGPFRDYRR</sequence>
<organism>
    <name type="scientific">Salmonella typhimurium (strain LT2 / SGSC1412 / ATCC 700720)</name>
    <dbReference type="NCBI Taxonomy" id="99287"/>
    <lineage>
        <taxon>Bacteria</taxon>
        <taxon>Pseudomonadati</taxon>
        <taxon>Pseudomonadota</taxon>
        <taxon>Gammaproteobacteria</taxon>
        <taxon>Enterobacterales</taxon>
        <taxon>Enterobacteriaceae</taxon>
        <taxon>Salmonella</taxon>
    </lineage>
</organism>
<name>PURR_SALTY</name>